<sequence length="215" mass="23275">MSEAKRLAAEKAIEYVEDGMIVGVGTGSTVAYFIDALARIQHRIKGAVSSSEQSTARLKQHGIEVIELNHSGNLSLYVDGADECDANKCLIKGGGAALTREKIIAEASERFICIIDPSKQVPVLGRFPLPVEVIPMARSLVARQIRDMTGGQPTWREGVVTDNGNQILDIHNLQITDPEKLERELNQLPGVVCVGLFARRRADVVIVGGEPPVVL</sequence>
<proteinExistence type="evidence at protein level"/>
<gene>
    <name evidence="1" type="primary">rpiA</name>
    <name type="ordered locus">Smlt3868</name>
</gene>
<dbReference type="EC" id="5.3.1.6" evidence="1"/>
<dbReference type="EMBL" id="AM743169">
    <property type="protein sequence ID" value="CAQ47272.1"/>
    <property type="molecule type" value="Genomic_DNA"/>
</dbReference>
<dbReference type="RefSeq" id="WP_005410902.1">
    <property type="nucleotide sequence ID" value="NC_010943.1"/>
</dbReference>
<dbReference type="PDB" id="7LDA">
    <property type="method" value="X-ray"/>
    <property type="resolution" value="1.45 A"/>
    <property type="chains" value="A/B=1-215"/>
</dbReference>
<dbReference type="PDBsum" id="7LDA"/>
<dbReference type="SMR" id="B2FT30"/>
<dbReference type="EnsemblBacteria" id="CAQ47272">
    <property type="protein sequence ID" value="CAQ47272"/>
    <property type="gene ID" value="Smlt3868"/>
</dbReference>
<dbReference type="GeneID" id="86938209"/>
<dbReference type="KEGG" id="sml:Smlt3868"/>
<dbReference type="eggNOG" id="COG0120">
    <property type="taxonomic scope" value="Bacteria"/>
</dbReference>
<dbReference type="HOGENOM" id="CLU_056590_1_1_6"/>
<dbReference type="UniPathway" id="UPA00115">
    <property type="reaction ID" value="UER00412"/>
</dbReference>
<dbReference type="Proteomes" id="UP000008840">
    <property type="component" value="Chromosome"/>
</dbReference>
<dbReference type="GO" id="GO:0005829">
    <property type="term" value="C:cytosol"/>
    <property type="evidence" value="ECO:0007669"/>
    <property type="project" value="TreeGrafter"/>
</dbReference>
<dbReference type="GO" id="GO:0004751">
    <property type="term" value="F:ribose-5-phosphate isomerase activity"/>
    <property type="evidence" value="ECO:0007669"/>
    <property type="project" value="UniProtKB-UniRule"/>
</dbReference>
<dbReference type="GO" id="GO:0006014">
    <property type="term" value="P:D-ribose metabolic process"/>
    <property type="evidence" value="ECO:0007669"/>
    <property type="project" value="TreeGrafter"/>
</dbReference>
<dbReference type="GO" id="GO:0009052">
    <property type="term" value="P:pentose-phosphate shunt, non-oxidative branch"/>
    <property type="evidence" value="ECO:0007669"/>
    <property type="project" value="UniProtKB-UniRule"/>
</dbReference>
<dbReference type="CDD" id="cd01398">
    <property type="entry name" value="RPI_A"/>
    <property type="match status" value="1"/>
</dbReference>
<dbReference type="FunFam" id="3.30.70.260:FF:000004">
    <property type="entry name" value="Ribose-5-phosphate isomerase A"/>
    <property type="match status" value="1"/>
</dbReference>
<dbReference type="FunFam" id="3.40.50.1360:FF:000001">
    <property type="entry name" value="Ribose-5-phosphate isomerase A"/>
    <property type="match status" value="1"/>
</dbReference>
<dbReference type="Gene3D" id="3.30.70.260">
    <property type="match status" value="1"/>
</dbReference>
<dbReference type="Gene3D" id="3.40.50.1360">
    <property type="match status" value="1"/>
</dbReference>
<dbReference type="HAMAP" id="MF_00170">
    <property type="entry name" value="Rib_5P_isom_A"/>
    <property type="match status" value="1"/>
</dbReference>
<dbReference type="InterPro" id="IPR037171">
    <property type="entry name" value="NagB/RpiA_transferase-like"/>
</dbReference>
<dbReference type="InterPro" id="IPR020672">
    <property type="entry name" value="Ribose5P_isomerase_typA_subgr"/>
</dbReference>
<dbReference type="InterPro" id="IPR004788">
    <property type="entry name" value="Ribose5P_isomerase_type_A"/>
</dbReference>
<dbReference type="NCBIfam" id="NF001924">
    <property type="entry name" value="PRK00702.1"/>
    <property type="match status" value="1"/>
</dbReference>
<dbReference type="NCBIfam" id="TIGR00021">
    <property type="entry name" value="rpiA"/>
    <property type="match status" value="1"/>
</dbReference>
<dbReference type="PANTHER" id="PTHR11934">
    <property type="entry name" value="RIBOSE-5-PHOSPHATE ISOMERASE"/>
    <property type="match status" value="1"/>
</dbReference>
<dbReference type="PANTHER" id="PTHR11934:SF0">
    <property type="entry name" value="RIBOSE-5-PHOSPHATE ISOMERASE"/>
    <property type="match status" value="1"/>
</dbReference>
<dbReference type="Pfam" id="PF06026">
    <property type="entry name" value="Rib_5-P_isom_A"/>
    <property type="match status" value="1"/>
</dbReference>
<dbReference type="SUPFAM" id="SSF75445">
    <property type="entry name" value="D-ribose-5-phosphate isomerase (RpiA), lid domain"/>
    <property type="match status" value="1"/>
</dbReference>
<dbReference type="SUPFAM" id="SSF100950">
    <property type="entry name" value="NagB/RpiA/CoA transferase-like"/>
    <property type="match status" value="1"/>
</dbReference>
<comment type="function">
    <text evidence="1">Catalyzes the reversible conversion of ribose-5-phosphate to ribulose 5-phosphate.</text>
</comment>
<comment type="catalytic activity">
    <reaction evidence="1">
        <text>aldehydo-D-ribose 5-phosphate = D-ribulose 5-phosphate</text>
        <dbReference type="Rhea" id="RHEA:14657"/>
        <dbReference type="ChEBI" id="CHEBI:58121"/>
        <dbReference type="ChEBI" id="CHEBI:58273"/>
        <dbReference type="EC" id="5.3.1.6"/>
    </reaction>
</comment>
<comment type="pathway">
    <text evidence="1">Carbohydrate degradation; pentose phosphate pathway; D-ribose 5-phosphate from D-ribulose 5-phosphate (non-oxidative stage): step 1/1.</text>
</comment>
<comment type="subunit">
    <text evidence="1">Homodimer.</text>
</comment>
<comment type="similarity">
    <text evidence="1">Belongs to the ribose 5-phosphate isomerase family.</text>
</comment>
<organism>
    <name type="scientific">Stenotrophomonas maltophilia (strain K279a)</name>
    <dbReference type="NCBI Taxonomy" id="522373"/>
    <lineage>
        <taxon>Bacteria</taxon>
        <taxon>Pseudomonadati</taxon>
        <taxon>Pseudomonadota</taxon>
        <taxon>Gammaproteobacteria</taxon>
        <taxon>Lysobacterales</taxon>
        <taxon>Lysobacteraceae</taxon>
        <taxon>Stenotrophomonas</taxon>
        <taxon>Stenotrophomonas maltophilia group</taxon>
    </lineage>
</organism>
<accession>B2FT30</accession>
<feature type="chain" id="PRO_1000097697" description="Ribose-5-phosphate isomerase A">
    <location>
        <begin position="1"/>
        <end position="215"/>
    </location>
</feature>
<feature type="active site" description="Proton acceptor" evidence="1">
    <location>
        <position position="101"/>
    </location>
</feature>
<feature type="binding site" evidence="1">
    <location>
        <begin position="26"/>
        <end position="29"/>
    </location>
    <ligand>
        <name>substrate</name>
    </ligand>
</feature>
<feature type="binding site" evidence="1">
    <location>
        <begin position="79"/>
        <end position="82"/>
    </location>
    <ligand>
        <name>substrate</name>
    </ligand>
</feature>
<feature type="binding site" evidence="1">
    <location>
        <begin position="92"/>
        <end position="95"/>
    </location>
    <ligand>
        <name>substrate</name>
    </ligand>
</feature>
<feature type="binding site" evidence="1">
    <location>
        <position position="119"/>
    </location>
    <ligand>
        <name>substrate</name>
    </ligand>
</feature>
<feature type="helix" evidence="2">
    <location>
        <begin position="2"/>
        <end position="12"/>
    </location>
</feature>
<feature type="helix" evidence="2">
    <location>
        <begin position="13"/>
        <end position="15"/>
    </location>
</feature>
<feature type="strand" evidence="2">
    <location>
        <begin position="21"/>
        <end position="24"/>
    </location>
</feature>
<feature type="helix" evidence="2">
    <location>
        <begin position="28"/>
        <end position="39"/>
    </location>
</feature>
<feature type="helix" evidence="2">
    <location>
        <begin position="40"/>
        <end position="43"/>
    </location>
</feature>
<feature type="strand" evidence="2">
    <location>
        <begin position="46"/>
        <end position="51"/>
    </location>
</feature>
<feature type="helix" evidence="2">
    <location>
        <begin position="52"/>
        <end position="60"/>
    </location>
</feature>
<feature type="helix" evidence="2">
    <location>
        <begin position="68"/>
        <end position="71"/>
    </location>
</feature>
<feature type="strand" evidence="2">
    <location>
        <begin position="73"/>
        <end position="79"/>
    </location>
</feature>
<feature type="strand" evidence="2">
    <location>
        <begin position="82"/>
        <end position="84"/>
    </location>
</feature>
<feature type="helix" evidence="2">
    <location>
        <begin position="98"/>
        <end position="106"/>
    </location>
</feature>
<feature type="strand" evidence="2">
    <location>
        <begin position="108"/>
        <end position="115"/>
    </location>
</feature>
<feature type="helix" evidence="2">
    <location>
        <begin position="117"/>
        <end position="119"/>
    </location>
</feature>
<feature type="strand" evidence="2">
    <location>
        <begin position="122"/>
        <end position="124"/>
    </location>
</feature>
<feature type="strand" evidence="2">
    <location>
        <begin position="129"/>
        <end position="133"/>
    </location>
</feature>
<feature type="helix" evidence="2">
    <location>
        <begin position="135"/>
        <end position="137"/>
    </location>
</feature>
<feature type="helix" evidence="2">
    <location>
        <begin position="138"/>
        <end position="149"/>
    </location>
</feature>
<feature type="strand" evidence="2">
    <location>
        <begin position="152"/>
        <end position="155"/>
    </location>
</feature>
<feature type="strand" evidence="2">
    <location>
        <begin position="166"/>
        <end position="172"/>
    </location>
</feature>
<feature type="helix" evidence="2">
    <location>
        <begin position="178"/>
        <end position="185"/>
    </location>
</feature>
<feature type="strand" evidence="2">
    <location>
        <begin position="191"/>
        <end position="197"/>
    </location>
</feature>
<feature type="strand" evidence="2">
    <location>
        <begin position="203"/>
        <end position="207"/>
    </location>
</feature>
<feature type="strand" evidence="2">
    <location>
        <begin position="209"/>
        <end position="211"/>
    </location>
</feature>
<feature type="strand" evidence="2">
    <location>
        <begin position="213"/>
        <end position="215"/>
    </location>
</feature>
<keyword id="KW-0002">3D-structure</keyword>
<keyword id="KW-0413">Isomerase</keyword>
<keyword id="KW-1185">Reference proteome</keyword>
<protein>
    <recommendedName>
        <fullName evidence="1">Ribose-5-phosphate isomerase A</fullName>
        <ecNumber evidence="1">5.3.1.6</ecNumber>
    </recommendedName>
    <alternativeName>
        <fullName evidence="1">Phosphoriboisomerase A</fullName>
        <shortName evidence="1">PRI</shortName>
    </alternativeName>
</protein>
<name>RPIA_STRMK</name>
<evidence type="ECO:0000255" key="1">
    <source>
        <dbReference type="HAMAP-Rule" id="MF_00170"/>
    </source>
</evidence>
<evidence type="ECO:0007829" key="2">
    <source>
        <dbReference type="PDB" id="7LDA"/>
    </source>
</evidence>
<reference key="1">
    <citation type="journal article" date="2008" name="Genome Biol.">
        <title>The complete genome, comparative and functional analysis of Stenotrophomonas maltophilia reveals an organism heavily shielded by drug resistance determinants.</title>
        <authorList>
            <person name="Crossman L.C."/>
            <person name="Gould V.C."/>
            <person name="Dow J.M."/>
            <person name="Vernikos G.S."/>
            <person name="Okazaki A."/>
            <person name="Sebaihia M."/>
            <person name="Saunders D."/>
            <person name="Arrowsmith C."/>
            <person name="Carver T."/>
            <person name="Peters N."/>
            <person name="Adlem E."/>
            <person name="Kerhornou A."/>
            <person name="Lord A."/>
            <person name="Murphy L."/>
            <person name="Seeger K."/>
            <person name="Squares R."/>
            <person name="Rutter S."/>
            <person name="Quail M.A."/>
            <person name="Rajandream M.A."/>
            <person name="Harris D."/>
            <person name="Churcher C."/>
            <person name="Bentley S.D."/>
            <person name="Parkhill J."/>
            <person name="Thomson N.R."/>
            <person name="Avison M.B."/>
        </authorList>
    </citation>
    <scope>NUCLEOTIDE SEQUENCE [LARGE SCALE GENOMIC DNA]</scope>
    <source>
        <strain>K279a</strain>
    </source>
</reference>